<reference key="1">
    <citation type="journal article" date="2005" name="Nat. Biotechnol.">
        <title>Complete genome sequence of the acetic acid bacterium Gluconobacter oxydans.</title>
        <authorList>
            <person name="Prust C."/>
            <person name="Hoffmeister M."/>
            <person name="Liesegang H."/>
            <person name="Wiezer A."/>
            <person name="Fricke W.F."/>
            <person name="Ehrenreich A."/>
            <person name="Gottschalk G."/>
            <person name="Deppenmeier U."/>
        </authorList>
    </citation>
    <scope>NUCLEOTIDE SEQUENCE [LARGE SCALE GENOMIC DNA]</scope>
    <source>
        <strain>621H</strain>
    </source>
</reference>
<comment type="subunit">
    <text evidence="1">Part of the 50S ribosomal subunit. Contacts protein L32.</text>
</comment>
<comment type="similarity">
    <text evidence="1">Belongs to the bacterial ribosomal protein bL17 family.</text>
</comment>
<proteinExistence type="inferred from homology"/>
<sequence length="140" mass="15353">MRHGVSGRKLNVTSSHRAAMFRNMAVALIKHEQITTTLPKAKELRPVVEKLITLGKRGDLHARRQAFAQLRDDAVVTKLFSAVAERYKGRAGGYSRVLKAGVRYGDNADMAVIELVDRDVAAKGQDSGPKQNVAEEQEAA</sequence>
<feature type="chain" id="PRO_0000267876" description="Large ribosomal subunit protein bL17">
    <location>
        <begin position="1"/>
        <end position="140"/>
    </location>
</feature>
<evidence type="ECO:0000255" key="1">
    <source>
        <dbReference type="HAMAP-Rule" id="MF_01368"/>
    </source>
</evidence>
<evidence type="ECO:0000305" key="2"/>
<organism>
    <name type="scientific">Gluconobacter oxydans (strain 621H)</name>
    <name type="common">Gluconobacter suboxydans</name>
    <dbReference type="NCBI Taxonomy" id="290633"/>
    <lineage>
        <taxon>Bacteria</taxon>
        <taxon>Pseudomonadati</taxon>
        <taxon>Pseudomonadota</taxon>
        <taxon>Alphaproteobacteria</taxon>
        <taxon>Acetobacterales</taxon>
        <taxon>Acetobacteraceae</taxon>
        <taxon>Gluconobacter</taxon>
    </lineage>
</organism>
<name>RL17_GLUOX</name>
<protein>
    <recommendedName>
        <fullName evidence="1">Large ribosomal subunit protein bL17</fullName>
    </recommendedName>
    <alternativeName>
        <fullName evidence="2">50S ribosomal protein L17</fullName>
    </alternativeName>
</protein>
<gene>
    <name evidence="1" type="primary">rplQ</name>
    <name type="ordered locus">GOX0355</name>
</gene>
<dbReference type="EMBL" id="CP000009">
    <property type="protein sequence ID" value="AAW60138.1"/>
    <property type="molecule type" value="Genomic_DNA"/>
</dbReference>
<dbReference type="RefSeq" id="WP_011251941.1">
    <property type="nucleotide sequence ID" value="NZ_LT900338.1"/>
</dbReference>
<dbReference type="SMR" id="Q5FU08"/>
<dbReference type="STRING" id="290633.GOX0355"/>
<dbReference type="GeneID" id="56904621"/>
<dbReference type="KEGG" id="gox:GOX0355"/>
<dbReference type="eggNOG" id="COG0203">
    <property type="taxonomic scope" value="Bacteria"/>
</dbReference>
<dbReference type="HOGENOM" id="CLU_074407_2_2_5"/>
<dbReference type="Proteomes" id="UP000006375">
    <property type="component" value="Chromosome"/>
</dbReference>
<dbReference type="GO" id="GO:0022625">
    <property type="term" value="C:cytosolic large ribosomal subunit"/>
    <property type="evidence" value="ECO:0007669"/>
    <property type="project" value="TreeGrafter"/>
</dbReference>
<dbReference type="GO" id="GO:0003735">
    <property type="term" value="F:structural constituent of ribosome"/>
    <property type="evidence" value="ECO:0007669"/>
    <property type="project" value="InterPro"/>
</dbReference>
<dbReference type="GO" id="GO:0006412">
    <property type="term" value="P:translation"/>
    <property type="evidence" value="ECO:0007669"/>
    <property type="project" value="UniProtKB-UniRule"/>
</dbReference>
<dbReference type="FunFam" id="3.90.1030.10:FF:000001">
    <property type="entry name" value="50S ribosomal protein L17"/>
    <property type="match status" value="1"/>
</dbReference>
<dbReference type="Gene3D" id="3.90.1030.10">
    <property type="entry name" value="Ribosomal protein L17"/>
    <property type="match status" value="1"/>
</dbReference>
<dbReference type="HAMAP" id="MF_01368">
    <property type="entry name" value="Ribosomal_bL17"/>
    <property type="match status" value="1"/>
</dbReference>
<dbReference type="InterPro" id="IPR000456">
    <property type="entry name" value="Ribosomal_bL17"/>
</dbReference>
<dbReference type="InterPro" id="IPR047859">
    <property type="entry name" value="Ribosomal_bL17_CS"/>
</dbReference>
<dbReference type="InterPro" id="IPR036373">
    <property type="entry name" value="Ribosomal_bL17_sf"/>
</dbReference>
<dbReference type="NCBIfam" id="TIGR00059">
    <property type="entry name" value="L17"/>
    <property type="match status" value="1"/>
</dbReference>
<dbReference type="PANTHER" id="PTHR14413:SF16">
    <property type="entry name" value="LARGE RIBOSOMAL SUBUNIT PROTEIN BL17M"/>
    <property type="match status" value="1"/>
</dbReference>
<dbReference type="PANTHER" id="PTHR14413">
    <property type="entry name" value="RIBOSOMAL PROTEIN L17"/>
    <property type="match status" value="1"/>
</dbReference>
<dbReference type="Pfam" id="PF01196">
    <property type="entry name" value="Ribosomal_L17"/>
    <property type="match status" value="1"/>
</dbReference>
<dbReference type="SUPFAM" id="SSF64263">
    <property type="entry name" value="Prokaryotic ribosomal protein L17"/>
    <property type="match status" value="1"/>
</dbReference>
<dbReference type="PROSITE" id="PS01167">
    <property type="entry name" value="RIBOSOMAL_L17"/>
    <property type="match status" value="1"/>
</dbReference>
<accession>Q5FU08</accession>
<keyword id="KW-1185">Reference proteome</keyword>
<keyword id="KW-0687">Ribonucleoprotein</keyword>
<keyword id="KW-0689">Ribosomal protein</keyword>